<organism>
    <name type="scientific">Mus musculus</name>
    <name type="common">Mouse</name>
    <dbReference type="NCBI Taxonomy" id="10090"/>
    <lineage>
        <taxon>Eukaryota</taxon>
        <taxon>Metazoa</taxon>
        <taxon>Chordata</taxon>
        <taxon>Craniata</taxon>
        <taxon>Vertebrata</taxon>
        <taxon>Euteleostomi</taxon>
        <taxon>Mammalia</taxon>
        <taxon>Eutheria</taxon>
        <taxon>Euarchontoglires</taxon>
        <taxon>Glires</taxon>
        <taxon>Rodentia</taxon>
        <taxon>Myomorpha</taxon>
        <taxon>Muroidea</taxon>
        <taxon>Muridae</taxon>
        <taxon>Murinae</taxon>
        <taxon>Mus</taxon>
        <taxon>Mus</taxon>
    </lineage>
</organism>
<gene>
    <name evidence="2" type="primary">Rbsn</name>
    <name evidence="7" type="synonym">Zfyve20</name>
</gene>
<feature type="initiator methionine" description="Removed" evidence="2">
    <location>
        <position position="1"/>
    </location>
</feature>
<feature type="chain" id="PRO_0000098712" description="Rabenosyn-5">
    <location>
        <begin position="2"/>
        <end position="783"/>
    </location>
</feature>
<feature type="domain" description="UIM" evidence="6">
    <location>
        <begin position="495"/>
        <end position="514"/>
    </location>
</feature>
<feature type="zinc finger region" description="C2H2-type">
    <location>
        <begin position="14"/>
        <end position="37"/>
    </location>
</feature>
<feature type="zinc finger region" description="FYVE-type" evidence="4">
    <location>
        <begin position="156"/>
        <end position="259"/>
    </location>
</feature>
<feature type="region of interest" description="Necessary for the correct targeting to endosomes" evidence="1">
    <location>
        <begin position="99"/>
        <end position="262"/>
    </location>
</feature>
<feature type="region of interest" description="Disordered" evidence="5">
    <location>
        <begin position="206"/>
        <end position="240"/>
    </location>
</feature>
<feature type="region of interest" description="Necessary for interaction with EHD1" evidence="1">
    <location>
        <begin position="263"/>
        <end position="783"/>
    </location>
</feature>
<feature type="region of interest" description="Necessary for interaction with RAB4A" evidence="1">
    <location>
        <begin position="263"/>
        <end position="499"/>
    </location>
</feature>
<feature type="region of interest" description="Disordered" evidence="5">
    <location>
        <begin position="387"/>
        <end position="433"/>
    </location>
</feature>
<feature type="region of interest" description="Disordered" evidence="5">
    <location>
        <begin position="569"/>
        <end position="638"/>
    </location>
</feature>
<feature type="region of interest" description="Necessary for interaction with RAB5A" evidence="1">
    <location>
        <begin position="627"/>
        <end position="783"/>
    </location>
</feature>
<feature type="region of interest" description="Disordered" evidence="5">
    <location>
        <begin position="663"/>
        <end position="733"/>
    </location>
</feature>
<feature type="coiled-coil region" evidence="3">
    <location>
        <begin position="377"/>
        <end position="412"/>
    </location>
</feature>
<feature type="coiled-coil region" evidence="3">
    <location>
        <begin position="471"/>
        <end position="531"/>
    </location>
</feature>
<feature type="compositionally biased region" description="Polar residues" evidence="5">
    <location>
        <begin position="206"/>
        <end position="223"/>
    </location>
</feature>
<feature type="compositionally biased region" description="Low complexity" evidence="5">
    <location>
        <begin position="227"/>
        <end position="239"/>
    </location>
</feature>
<feature type="compositionally biased region" description="Basic and acidic residues" evidence="5">
    <location>
        <begin position="387"/>
        <end position="399"/>
    </location>
</feature>
<feature type="compositionally biased region" description="Basic and acidic residues" evidence="5">
    <location>
        <begin position="405"/>
        <end position="414"/>
    </location>
</feature>
<feature type="compositionally biased region" description="Polar residues" evidence="5">
    <location>
        <begin position="571"/>
        <end position="584"/>
    </location>
</feature>
<feature type="compositionally biased region" description="Polar residues" evidence="5">
    <location>
        <begin position="610"/>
        <end position="623"/>
    </location>
</feature>
<feature type="compositionally biased region" description="Acidic residues" evidence="5">
    <location>
        <begin position="663"/>
        <end position="673"/>
    </location>
</feature>
<feature type="compositionally biased region" description="Acidic residues" evidence="5">
    <location>
        <begin position="721"/>
        <end position="733"/>
    </location>
</feature>
<feature type="binding site" evidence="4">
    <location>
        <position position="162"/>
    </location>
    <ligand>
        <name>Zn(2+)</name>
        <dbReference type="ChEBI" id="CHEBI:29105"/>
        <label>1</label>
    </ligand>
</feature>
<feature type="binding site" evidence="4">
    <location>
        <position position="165"/>
    </location>
    <ligand>
        <name>Zn(2+)</name>
        <dbReference type="ChEBI" id="CHEBI:29105"/>
        <label>1</label>
    </ligand>
</feature>
<feature type="binding site" evidence="4">
    <location>
        <position position="178"/>
    </location>
    <ligand>
        <name>Zn(2+)</name>
        <dbReference type="ChEBI" id="CHEBI:29105"/>
        <label>2</label>
    </ligand>
</feature>
<feature type="binding site" evidence="4">
    <location>
        <position position="181"/>
    </location>
    <ligand>
        <name>Zn(2+)</name>
        <dbReference type="ChEBI" id="CHEBI:29105"/>
        <label>2</label>
    </ligand>
</feature>
<feature type="binding site" evidence="4">
    <location>
        <position position="186"/>
    </location>
    <ligand>
        <name>Zn(2+)</name>
        <dbReference type="ChEBI" id="CHEBI:29105"/>
        <label>1</label>
    </ligand>
</feature>
<feature type="binding site" evidence="4">
    <location>
        <position position="189"/>
    </location>
    <ligand>
        <name>Zn(2+)</name>
        <dbReference type="ChEBI" id="CHEBI:29105"/>
        <label>1</label>
    </ligand>
</feature>
<feature type="binding site" evidence="4">
    <location>
        <position position="251"/>
    </location>
    <ligand>
        <name>Zn(2+)</name>
        <dbReference type="ChEBI" id="CHEBI:29105"/>
        <label>2</label>
    </ligand>
</feature>
<feature type="binding site" evidence="4">
    <location>
        <position position="254"/>
    </location>
    <ligand>
        <name>Zn(2+)</name>
        <dbReference type="ChEBI" id="CHEBI:29105"/>
        <label>2</label>
    </ligand>
</feature>
<feature type="modified residue" description="N-acetylalanine" evidence="2">
    <location>
        <position position="2"/>
    </location>
</feature>
<feature type="modified residue" description="Phosphoserine" evidence="2">
    <location>
        <position position="3"/>
    </location>
</feature>
<feature type="modified residue" description="Phosphoserine" evidence="8">
    <location>
        <position position="214"/>
    </location>
</feature>
<feature type="modified residue" description="Phosphoserine" evidence="2">
    <location>
        <position position="218"/>
    </location>
</feature>
<feature type="modified residue" description="Phosphoserine" evidence="2">
    <location>
        <position position="225"/>
    </location>
</feature>
<feature type="modified residue" description="Phosphoserine" evidence="8">
    <location>
        <position position="229"/>
    </location>
</feature>
<feature type="modified residue" description="Phosphoserine" evidence="2">
    <location>
        <position position="686"/>
    </location>
</feature>
<feature type="sequence conflict" description="In Ref. 1; AAH31135." evidence="6" ref="1">
    <original>R</original>
    <variation>Q</variation>
    <location>
        <position position="227"/>
    </location>
</feature>
<feature type="sequence conflict" description="In Ref. 1; AAH31135." evidence="6" ref="1">
    <original>P</original>
    <variation>S</variation>
    <location>
        <position position="698"/>
    </location>
</feature>
<keyword id="KW-0007">Acetylation</keyword>
<keyword id="KW-1003">Cell membrane</keyword>
<keyword id="KW-0175">Coiled coil</keyword>
<keyword id="KW-0967">Endosome</keyword>
<keyword id="KW-0449">Lipoprotein</keyword>
<keyword id="KW-0472">Membrane</keyword>
<keyword id="KW-0479">Metal-binding</keyword>
<keyword id="KW-0597">Phosphoprotein</keyword>
<keyword id="KW-0653">Protein transport</keyword>
<keyword id="KW-1185">Reference proteome</keyword>
<keyword id="KW-0813">Transport</keyword>
<keyword id="KW-0862">Zinc</keyword>
<keyword id="KW-0863">Zinc-finger</keyword>
<accession>Q80Y56</accession>
<accession>Q8K0L6</accession>
<accession>Q9CTW0</accession>
<sequence length="783" mass="88491">MASLDDPGEVREGFLCPLCLKDLQSFYQLQSHYEEEHLEDRDVKGQIKNLVQKARKAKNKLLKREGDDRVEPGTQGYESFSYGGVDPYMWEPQELGAMRSHLSDFKKHRAARIDHYVVEVNKLIIRLEKLTAFDRTNTETSKIRAIEKSVVPWVNDQDVPFCPDCGNKFSIRNRRHHCRLCGSIMCKKCMELIGLPLAHKLTSASKDSLSTHTSPSQSPNSVHGSRRGSISSMSSVSSVLDEKDDDRIRCCTHCKDKLLKREQQMDEKEHTPDIVKLYEKLRLCMEKVDQKAPEYIRMAASLNAGETTYNLEHANDLRVEVQKVYELIDALSKKILTLGLNQDPSPHPNTLRLQRMIRYSATLFVQEKLLGLMSLPTKEQFEELKKKRKQDLEQKRTVERQAALESRRKLEERQSGLASHTANGDVRSLRGIPPPLRKAEGWLPLSEGQGQSEDPDPLLQQIYNITSFIRQAKAAGRTDEVRTLQENLRQLQDEYDQQQTEKAIELSRKQAEEEELQREQLQMLRKRELEREQEQFLAASLQTRTRVLELREVIPFQLEASRGPHIDLSYSLDQDSSPVQSSTAPDILTPGSALAPMHLWSGPPALGQETLPQSTMSQQSDKASLNPFDEDDLSSPTEGAISPAAVEAFLGPPAAVTKEYNPFEEDAEEEEVAELGAGNPFTDPDSPAPNPFDEDDGPRPASPAAPGNPFEECPSTNPFEVDSDSGMEAEEHIEEELLLQQIDNIKAYIFDAKQCGRMDEVEVLTENLRELKCTLAKQKGAPN</sequence>
<proteinExistence type="evidence at protein level"/>
<dbReference type="EMBL" id="BC031135">
    <property type="protein sequence ID" value="AAH31135.1"/>
    <property type="molecule type" value="mRNA"/>
</dbReference>
<dbReference type="EMBL" id="BC049106">
    <property type="protein sequence ID" value="AAH49106.1"/>
    <property type="molecule type" value="mRNA"/>
</dbReference>
<dbReference type="EMBL" id="AK019909">
    <property type="protein sequence ID" value="BAB31910.1"/>
    <property type="molecule type" value="mRNA"/>
</dbReference>
<dbReference type="CCDS" id="CCDS20374.1"/>
<dbReference type="RefSeq" id="NP_084357.2">
    <property type="nucleotide sequence ID" value="NM_030081.2"/>
</dbReference>
<dbReference type="RefSeq" id="XP_006506831.1">
    <property type="nucleotide sequence ID" value="XM_006506768.3"/>
</dbReference>
<dbReference type="SMR" id="Q80Y56"/>
<dbReference type="BioGRID" id="219306">
    <property type="interactions" value="8"/>
</dbReference>
<dbReference type="FunCoup" id="Q80Y56">
    <property type="interactions" value="4648"/>
</dbReference>
<dbReference type="STRING" id="10090.ENSMUSP00000014694"/>
<dbReference type="GlyGen" id="Q80Y56">
    <property type="glycosylation" value="1 site, 1 N-linked glycan (1 site)"/>
</dbReference>
<dbReference type="iPTMnet" id="Q80Y56"/>
<dbReference type="PhosphoSitePlus" id="Q80Y56"/>
<dbReference type="SwissPalm" id="Q80Y56"/>
<dbReference type="jPOST" id="Q80Y56"/>
<dbReference type="PaxDb" id="10090-ENSMUSP00000014694"/>
<dbReference type="PeptideAtlas" id="Q80Y56"/>
<dbReference type="ProteomicsDB" id="300276"/>
<dbReference type="Pumba" id="Q80Y56"/>
<dbReference type="Antibodypedia" id="26666">
    <property type="antibodies" value="189 antibodies from 32 providers"/>
</dbReference>
<dbReference type="DNASU" id="78287"/>
<dbReference type="Ensembl" id="ENSMUST00000014694.11">
    <property type="protein sequence ID" value="ENSMUSP00000014694.9"/>
    <property type="gene ID" value="ENSMUSG00000014550.15"/>
</dbReference>
<dbReference type="GeneID" id="78287"/>
<dbReference type="KEGG" id="mmu:78287"/>
<dbReference type="UCSC" id="uc009cyv.1">
    <property type="organism name" value="mouse"/>
</dbReference>
<dbReference type="AGR" id="MGI:1925537"/>
<dbReference type="CTD" id="64145"/>
<dbReference type="MGI" id="MGI:1925537">
    <property type="gene designation" value="Rbsn"/>
</dbReference>
<dbReference type="VEuPathDB" id="HostDB:ENSMUSG00000014550"/>
<dbReference type="eggNOG" id="KOG1842">
    <property type="taxonomic scope" value="Eukaryota"/>
</dbReference>
<dbReference type="GeneTree" id="ENSGT00390000007159"/>
<dbReference type="HOGENOM" id="CLU_020798_2_0_1"/>
<dbReference type="InParanoid" id="Q80Y56"/>
<dbReference type="OMA" id="QKMYEFI"/>
<dbReference type="OrthoDB" id="166134at2759"/>
<dbReference type="PhylomeDB" id="Q80Y56"/>
<dbReference type="TreeFam" id="TF106125"/>
<dbReference type="Reactome" id="R-MMU-168138">
    <property type="pathway name" value="Toll Like Receptor 9 (TLR9) Cascade"/>
</dbReference>
<dbReference type="Reactome" id="R-MMU-983231">
    <property type="pathway name" value="Factors involved in megakaryocyte development and platelet production"/>
</dbReference>
<dbReference type="BioGRID-ORCS" id="78287">
    <property type="hits" value="8 hits in 76 CRISPR screens"/>
</dbReference>
<dbReference type="PRO" id="PR:Q80Y56"/>
<dbReference type="Proteomes" id="UP000000589">
    <property type="component" value="Chromosome 6"/>
</dbReference>
<dbReference type="RNAct" id="Q80Y56">
    <property type="molecule type" value="protein"/>
</dbReference>
<dbReference type="Bgee" id="ENSMUSG00000014550">
    <property type="expression patterns" value="Expressed in ear vesicle and 234 other cell types or tissues"/>
</dbReference>
<dbReference type="ExpressionAtlas" id="Q80Y56">
    <property type="expression patterns" value="baseline and differential"/>
</dbReference>
<dbReference type="GO" id="GO:0005829">
    <property type="term" value="C:cytosol"/>
    <property type="evidence" value="ECO:0007669"/>
    <property type="project" value="GOC"/>
</dbReference>
<dbReference type="GO" id="GO:0005769">
    <property type="term" value="C:early endosome"/>
    <property type="evidence" value="ECO:0000250"/>
    <property type="project" value="UniProtKB"/>
</dbReference>
<dbReference type="GO" id="GO:0031901">
    <property type="term" value="C:early endosome membrane"/>
    <property type="evidence" value="ECO:0007669"/>
    <property type="project" value="UniProtKB-SubCell"/>
</dbReference>
<dbReference type="GO" id="GO:0005886">
    <property type="term" value="C:plasma membrane"/>
    <property type="evidence" value="ECO:0007669"/>
    <property type="project" value="UniProtKB-SubCell"/>
</dbReference>
<dbReference type="GO" id="GO:0032266">
    <property type="term" value="F:phosphatidylinositol-3-phosphate binding"/>
    <property type="evidence" value="ECO:0000250"/>
    <property type="project" value="UniProtKB"/>
</dbReference>
<dbReference type="GO" id="GO:0031267">
    <property type="term" value="F:small GTPase binding"/>
    <property type="evidence" value="ECO:0000353"/>
    <property type="project" value="MGI"/>
</dbReference>
<dbReference type="GO" id="GO:0008270">
    <property type="term" value="F:zinc ion binding"/>
    <property type="evidence" value="ECO:0007669"/>
    <property type="project" value="UniProtKB-KW"/>
</dbReference>
<dbReference type="GO" id="GO:0034498">
    <property type="term" value="P:early endosome to Golgi transport"/>
    <property type="evidence" value="ECO:0007669"/>
    <property type="project" value="Ensembl"/>
</dbReference>
<dbReference type="GO" id="GO:0090160">
    <property type="term" value="P:Golgi to lysosome transport"/>
    <property type="evidence" value="ECO:0007669"/>
    <property type="project" value="Ensembl"/>
</dbReference>
<dbReference type="GO" id="GO:0015031">
    <property type="term" value="P:protein transport"/>
    <property type="evidence" value="ECO:0007669"/>
    <property type="project" value="UniProtKB-KW"/>
</dbReference>
<dbReference type="GO" id="GO:1903358">
    <property type="term" value="P:regulation of Golgi organization"/>
    <property type="evidence" value="ECO:0007669"/>
    <property type="project" value="Ensembl"/>
</dbReference>
<dbReference type="CDD" id="cd15716">
    <property type="entry name" value="FYVE_RBNS5"/>
    <property type="match status" value="1"/>
</dbReference>
<dbReference type="Gene3D" id="4.10.860.20">
    <property type="entry name" value="Rabenosyn, Rab binding domain"/>
    <property type="match status" value="2"/>
</dbReference>
<dbReference type="Gene3D" id="3.30.40.10">
    <property type="entry name" value="Zinc/RING finger domain, C3HC4 (zinc finger)"/>
    <property type="match status" value="1"/>
</dbReference>
<dbReference type="InterPro" id="IPR052727">
    <property type="entry name" value="Rab4/Rab5_effector"/>
</dbReference>
<dbReference type="InterPro" id="IPR021565">
    <property type="entry name" value="Rbsn_Rab-bd"/>
</dbReference>
<dbReference type="InterPro" id="IPR036531">
    <property type="entry name" value="Rbsn_Rab-bd_sf"/>
</dbReference>
<dbReference type="InterPro" id="IPR013087">
    <property type="entry name" value="Znf_C2H2_type"/>
</dbReference>
<dbReference type="InterPro" id="IPR000306">
    <property type="entry name" value="Znf_FYVE"/>
</dbReference>
<dbReference type="InterPro" id="IPR017455">
    <property type="entry name" value="Znf_FYVE-rel"/>
</dbReference>
<dbReference type="InterPro" id="IPR011011">
    <property type="entry name" value="Znf_FYVE_PHD"/>
</dbReference>
<dbReference type="InterPro" id="IPR013083">
    <property type="entry name" value="Znf_RING/FYVE/PHD"/>
</dbReference>
<dbReference type="PANTHER" id="PTHR13510">
    <property type="entry name" value="FYVE-FINGER-CONTAINING RAB5 EFFECTOR PROTEIN RABENOSYN-5-RELATED"/>
    <property type="match status" value="1"/>
</dbReference>
<dbReference type="PANTHER" id="PTHR13510:SF44">
    <property type="entry name" value="RABENOSYN-5"/>
    <property type="match status" value="1"/>
</dbReference>
<dbReference type="Pfam" id="PF01363">
    <property type="entry name" value="FYVE"/>
    <property type="match status" value="1"/>
</dbReference>
<dbReference type="Pfam" id="PF16601">
    <property type="entry name" value="NPF"/>
    <property type="match status" value="1"/>
</dbReference>
<dbReference type="Pfam" id="PF11464">
    <property type="entry name" value="Rbsn"/>
    <property type="match status" value="2"/>
</dbReference>
<dbReference type="SMART" id="SM00064">
    <property type="entry name" value="FYVE"/>
    <property type="match status" value="1"/>
</dbReference>
<dbReference type="SUPFAM" id="SSF57903">
    <property type="entry name" value="FYVE/PHD zinc finger"/>
    <property type="match status" value="1"/>
</dbReference>
<dbReference type="SUPFAM" id="SSF140125">
    <property type="entry name" value="Rabenosyn-5 Rab-binding domain-like"/>
    <property type="match status" value="2"/>
</dbReference>
<dbReference type="PROSITE" id="PS50178">
    <property type="entry name" value="ZF_FYVE"/>
    <property type="match status" value="1"/>
</dbReference>
<dbReference type="PROSITE" id="PS00028">
    <property type="entry name" value="ZINC_FINGER_C2H2_1"/>
    <property type="match status" value="1"/>
</dbReference>
<comment type="function">
    <text evidence="2">Rab4/Rab5 effector protein acting in early endocytic membrane fusion and membrane trafficking of recycling endosomes. Required for endosome fusion either homotypically or with clathrin coated vesicles. Plays a role in the lysosomal trafficking of CTSD/cathepsin D from the Golgi to lysosomes. Also promotes the recycling of transferrin directly from early endosomes to the plasma membrane. Binds phospholipid vesicles containing phosphatidylinositol 3-phosphate (PtdInsP3). Plays a role in the recycling of transferrin receptor to the plasma membrane (By similarity).</text>
</comment>
<comment type="subunit">
    <text evidence="1">Interacts with EHD1, RAB4A, RAB5A, RAB22A, RAB24 and VPS45. Binds simultaneously to RAB4A and RAB5A in vitro. Interacts with RAB4A and RAB5A that has been activated by GTP binding (By similarity).</text>
</comment>
<comment type="subcellular location">
    <subcellularLocation>
        <location evidence="1">Cell membrane</location>
        <topology evidence="1">Lipid-anchor</topology>
        <orientation evidence="1">Cytoplasmic side</orientation>
    </subcellularLocation>
    <subcellularLocation>
        <location evidence="2">Early endosome membrane</location>
        <topology evidence="1">Lipid-anchor</topology>
    </subcellularLocation>
    <text evidence="2">Enriched in endosomes that are in close proximity to clathrin-enriched regions at the cell surface (By similarity).</text>
</comment>
<evidence type="ECO:0000250" key="1"/>
<evidence type="ECO:0000250" key="2">
    <source>
        <dbReference type="UniProtKB" id="Q9H1K0"/>
    </source>
</evidence>
<evidence type="ECO:0000255" key="3"/>
<evidence type="ECO:0000255" key="4">
    <source>
        <dbReference type="PROSITE-ProRule" id="PRU00091"/>
    </source>
</evidence>
<evidence type="ECO:0000256" key="5">
    <source>
        <dbReference type="SAM" id="MobiDB-lite"/>
    </source>
</evidence>
<evidence type="ECO:0000305" key="6"/>
<evidence type="ECO:0000312" key="7">
    <source>
        <dbReference type="MGI" id="MGI:1925537"/>
    </source>
</evidence>
<evidence type="ECO:0007744" key="8">
    <source>
    </source>
</evidence>
<name>RBNS5_MOUSE</name>
<reference key="1">
    <citation type="journal article" date="2004" name="Genome Res.">
        <title>The status, quality, and expansion of the NIH full-length cDNA project: the Mammalian Gene Collection (MGC).</title>
        <authorList>
            <consortium name="The MGC Project Team"/>
        </authorList>
    </citation>
    <scope>NUCLEOTIDE SEQUENCE [LARGE SCALE MRNA]</scope>
    <source>
        <strain>C57BL/6J</strain>
        <strain>FVB/N</strain>
        <tissue>Brain</tissue>
        <tissue>Kidney</tissue>
    </source>
</reference>
<reference key="2">
    <citation type="journal article" date="2005" name="Science">
        <title>The transcriptional landscape of the mammalian genome.</title>
        <authorList>
            <person name="Carninci P."/>
            <person name="Kasukawa T."/>
            <person name="Katayama S."/>
            <person name="Gough J."/>
            <person name="Frith M.C."/>
            <person name="Maeda N."/>
            <person name="Oyama R."/>
            <person name="Ravasi T."/>
            <person name="Lenhard B."/>
            <person name="Wells C."/>
            <person name="Kodzius R."/>
            <person name="Shimokawa K."/>
            <person name="Bajic V.B."/>
            <person name="Brenner S.E."/>
            <person name="Batalov S."/>
            <person name="Forrest A.R."/>
            <person name="Zavolan M."/>
            <person name="Davis M.J."/>
            <person name="Wilming L.G."/>
            <person name="Aidinis V."/>
            <person name="Allen J.E."/>
            <person name="Ambesi-Impiombato A."/>
            <person name="Apweiler R."/>
            <person name="Aturaliya R.N."/>
            <person name="Bailey T.L."/>
            <person name="Bansal M."/>
            <person name="Baxter L."/>
            <person name="Beisel K.W."/>
            <person name="Bersano T."/>
            <person name="Bono H."/>
            <person name="Chalk A.M."/>
            <person name="Chiu K.P."/>
            <person name="Choudhary V."/>
            <person name="Christoffels A."/>
            <person name="Clutterbuck D.R."/>
            <person name="Crowe M.L."/>
            <person name="Dalla E."/>
            <person name="Dalrymple B.P."/>
            <person name="de Bono B."/>
            <person name="Della Gatta G."/>
            <person name="di Bernardo D."/>
            <person name="Down T."/>
            <person name="Engstrom P."/>
            <person name="Fagiolini M."/>
            <person name="Faulkner G."/>
            <person name="Fletcher C.F."/>
            <person name="Fukushima T."/>
            <person name="Furuno M."/>
            <person name="Futaki S."/>
            <person name="Gariboldi M."/>
            <person name="Georgii-Hemming P."/>
            <person name="Gingeras T.R."/>
            <person name="Gojobori T."/>
            <person name="Green R.E."/>
            <person name="Gustincich S."/>
            <person name="Harbers M."/>
            <person name="Hayashi Y."/>
            <person name="Hensch T.K."/>
            <person name="Hirokawa N."/>
            <person name="Hill D."/>
            <person name="Huminiecki L."/>
            <person name="Iacono M."/>
            <person name="Ikeo K."/>
            <person name="Iwama A."/>
            <person name="Ishikawa T."/>
            <person name="Jakt M."/>
            <person name="Kanapin A."/>
            <person name="Katoh M."/>
            <person name="Kawasawa Y."/>
            <person name="Kelso J."/>
            <person name="Kitamura H."/>
            <person name="Kitano H."/>
            <person name="Kollias G."/>
            <person name="Krishnan S.P."/>
            <person name="Kruger A."/>
            <person name="Kummerfeld S.K."/>
            <person name="Kurochkin I.V."/>
            <person name="Lareau L.F."/>
            <person name="Lazarevic D."/>
            <person name="Lipovich L."/>
            <person name="Liu J."/>
            <person name="Liuni S."/>
            <person name="McWilliam S."/>
            <person name="Madan Babu M."/>
            <person name="Madera M."/>
            <person name="Marchionni L."/>
            <person name="Matsuda H."/>
            <person name="Matsuzawa S."/>
            <person name="Miki H."/>
            <person name="Mignone F."/>
            <person name="Miyake S."/>
            <person name="Morris K."/>
            <person name="Mottagui-Tabar S."/>
            <person name="Mulder N."/>
            <person name="Nakano N."/>
            <person name="Nakauchi H."/>
            <person name="Ng P."/>
            <person name="Nilsson R."/>
            <person name="Nishiguchi S."/>
            <person name="Nishikawa S."/>
            <person name="Nori F."/>
            <person name="Ohara O."/>
            <person name="Okazaki Y."/>
            <person name="Orlando V."/>
            <person name="Pang K.C."/>
            <person name="Pavan W.J."/>
            <person name="Pavesi G."/>
            <person name="Pesole G."/>
            <person name="Petrovsky N."/>
            <person name="Piazza S."/>
            <person name="Reed J."/>
            <person name="Reid J.F."/>
            <person name="Ring B.Z."/>
            <person name="Ringwald M."/>
            <person name="Rost B."/>
            <person name="Ruan Y."/>
            <person name="Salzberg S.L."/>
            <person name="Sandelin A."/>
            <person name="Schneider C."/>
            <person name="Schoenbach C."/>
            <person name="Sekiguchi K."/>
            <person name="Semple C.A."/>
            <person name="Seno S."/>
            <person name="Sessa L."/>
            <person name="Sheng Y."/>
            <person name="Shibata Y."/>
            <person name="Shimada H."/>
            <person name="Shimada K."/>
            <person name="Silva D."/>
            <person name="Sinclair B."/>
            <person name="Sperling S."/>
            <person name="Stupka E."/>
            <person name="Sugiura K."/>
            <person name="Sultana R."/>
            <person name="Takenaka Y."/>
            <person name="Taki K."/>
            <person name="Tammoja K."/>
            <person name="Tan S.L."/>
            <person name="Tang S."/>
            <person name="Taylor M.S."/>
            <person name="Tegner J."/>
            <person name="Teichmann S.A."/>
            <person name="Ueda H.R."/>
            <person name="van Nimwegen E."/>
            <person name="Verardo R."/>
            <person name="Wei C.L."/>
            <person name="Yagi K."/>
            <person name="Yamanishi H."/>
            <person name="Zabarovsky E."/>
            <person name="Zhu S."/>
            <person name="Zimmer A."/>
            <person name="Hide W."/>
            <person name="Bult C."/>
            <person name="Grimmond S.M."/>
            <person name="Teasdale R.D."/>
            <person name="Liu E.T."/>
            <person name="Brusic V."/>
            <person name="Quackenbush J."/>
            <person name="Wahlestedt C."/>
            <person name="Mattick J.S."/>
            <person name="Hume D.A."/>
            <person name="Kai C."/>
            <person name="Sasaki D."/>
            <person name="Tomaru Y."/>
            <person name="Fukuda S."/>
            <person name="Kanamori-Katayama M."/>
            <person name="Suzuki M."/>
            <person name="Aoki J."/>
            <person name="Arakawa T."/>
            <person name="Iida J."/>
            <person name="Imamura K."/>
            <person name="Itoh M."/>
            <person name="Kato T."/>
            <person name="Kawaji H."/>
            <person name="Kawagashira N."/>
            <person name="Kawashima T."/>
            <person name="Kojima M."/>
            <person name="Kondo S."/>
            <person name="Konno H."/>
            <person name="Nakano K."/>
            <person name="Ninomiya N."/>
            <person name="Nishio T."/>
            <person name="Okada M."/>
            <person name="Plessy C."/>
            <person name="Shibata K."/>
            <person name="Shiraki T."/>
            <person name="Suzuki S."/>
            <person name="Tagami M."/>
            <person name="Waki K."/>
            <person name="Watahiki A."/>
            <person name="Okamura-Oho Y."/>
            <person name="Suzuki H."/>
            <person name="Kawai J."/>
            <person name="Hayashizaki Y."/>
        </authorList>
    </citation>
    <scope>NUCLEOTIDE SEQUENCE [LARGE SCALE MRNA] OF 1-384</scope>
    <source>
        <strain>C57BL/6J</strain>
        <tissue>Pituitary</tissue>
    </source>
</reference>
<reference key="3">
    <citation type="journal article" date="2010" name="Cell">
        <title>A tissue-specific atlas of mouse protein phosphorylation and expression.</title>
        <authorList>
            <person name="Huttlin E.L."/>
            <person name="Jedrychowski M.P."/>
            <person name="Elias J.E."/>
            <person name="Goswami T."/>
            <person name="Rad R."/>
            <person name="Beausoleil S.A."/>
            <person name="Villen J."/>
            <person name="Haas W."/>
            <person name="Sowa M.E."/>
            <person name="Gygi S.P."/>
        </authorList>
    </citation>
    <scope>PHOSPHORYLATION [LARGE SCALE ANALYSIS] AT SER-214 AND SER-229</scope>
    <scope>IDENTIFICATION BY MASS SPECTROMETRY [LARGE SCALE ANALYSIS]</scope>
    <source>
        <tissue>Brain</tissue>
        <tissue>Brown adipose tissue</tissue>
        <tissue>Liver</tissue>
        <tissue>Lung</tissue>
        <tissue>Testis</tissue>
    </source>
</reference>
<protein>
    <recommendedName>
        <fullName evidence="2">Rabenosyn-5</fullName>
    </recommendedName>
    <alternativeName>
        <fullName>FYVE finger-containing Rab5 effector protein rabenosyn-5</fullName>
    </alternativeName>
    <alternativeName>
        <fullName evidence="2">RAB effector RBSN</fullName>
    </alternativeName>
    <alternativeName>
        <fullName>Zinc finger FYVE domain-containing protein 20</fullName>
    </alternativeName>
</protein>